<gene>
    <name type="primary">mrp21</name>
    <name type="ORF">SPBC839.09c</name>
</gene>
<protein>
    <recommendedName>
        <fullName evidence="4">Small ribosomal subunit protein bS21m</fullName>
    </recommendedName>
    <alternativeName>
        <fullName>37S ribosomal protein mrp21, mitochondrial</fullName>
    </alternativeName>
</protein>
<comment type="function">
    <text evidence="1">Component of the mitochondrial ribosome (mitoribosome), a dedicated translation machinery responsible for the synthesis of mitochondrial genome-encoded proteins, including at least some of the essential transmembrane subunits of the mitochondrial respiratory chain. The mitoribosomes are attached to the mitochondrial inner membrane and translation products are cotranslationally integrated into the membrane.</text>
</comment>
<comment type="subunit">
    <text evidence="1">Component of the mitochondrial small ribosomal subunit (mt-SSU). Mature yeast 74S mitochondrial ribosomes consist of a small (37S) and a large (54S) subunit. The 37S small subunit contains a 15S ribosomal RNA (15S mt-rRNA) and at least 32 different proteins. The 54S large subunit contains a 21S rRNA (21S mt-rRNA) and at least 45 different proteins.</text>
</comment>
<comment type="subcellular location">
    <subcellularLocation>
        <location evidence="3">Mitochondrion</location>
    </subcellularLocation>
</comment>
<comment type="similarity">
    <text evidence="4">Belongs to the bacterial ribosomal protein bS21 family.</text>
</comment>
<feature type="transit peptide" description="Mitochondrion" evidence="2">
    <location>
        <begin position="1"/>
        <end position="14"/>
    </location>
</feature>
<feature type="chain" id="PRO_0000350750" description="Small ribosomal subunit protein bS21m">
    <location>
        <begin position="15"/>
        <end position="121"/>
    </location>
</feature>
<sequence length="121" mass="14316">MNSSYFPGVLGVRWVHTNRKLQKRKEEHGAFQDSLHFMIPAAETKDLGASVTVGNSLTRAFRQVDRICQRNNVPRLFRSQRFYEKPSEKRSRVRSERHRARFRAGIVRLVNLAKNMRRWGY</sequence>
<keyword id="KW-0496">Mitochondrion</keyword>
<keyword id="KW-1185">Reference proteome</keyword>
<keyword id="KW-0687">Ribonucleoprotein</keyword>
<keyword id="KW-0689">Ribosomal protein</keyword>
<keyword id="KW-0809">Transit peptide</keyword>
<dbReference type="EMBL" id="CU329671">
    <property type="protein sequence ID" value="CAB46702.1"/>
    <property type="molecule type" value="Genomic_DNA"/>
</dbReference>
<dbReference type="PIR" id="T40716">
    <property type="entry name" value="T40716"/>
</dbReference>
<dbReference type="RefSeq" id="NP_595249.1">
    <property type="nucleotide sequence ID" value="NM_001021155.2"/>
</dbReference>
<dbReference type="SMR" id="Q8WZK1"/>
<dbReference type="BioGRID" id="277712">
    <property type="interactions" value="11"/>
</dbReference>
<dbReference type="ComplexPortal" id="CPX-10315">
    <property type="entry name" value="37S mitochondrial small ribosomal subunit"/>
</dbReference>
<dbReference type="STRING" id="284812.Q8WZK1"/>
<dbReference type="PaxDb" id="4896-SPBC839.09c.1"/>
<dbReference type="EnsemblFungi" id="SPBC839.09c.1">
    <property type="protein sequence ID" value="SPBC839.09c.1:pep"/>
    <property type="gene ID" value="SPBC839.09c"/>
</dbReference>
<dbReference type="GeneID" id="2541198"/>
<dbReference type="KEGG" id="spo:2541198"/>
<dbReference type="PomBase" id="SPBC839.09c">
    <property type="gene designation" value="mrp21"/>
</dbReference>
<dbReference type="VEuPathDB" id="FungiDB:SPBC839.09c"/>
<dbReference type="eggNOG" id="ENOG502RJFK">
    <property type="taxonomic scope" value="Eukaryota"/>
</dbReference>
<dbReference type="HOGENOM" id="CLU_2005233_0_0_1"/>
<dbReference type="InParanoid" id="Q8WZK1"/>
<dbReference type="OMA" id="AKNMRRW"/>
<dbReference type="PRO" id="PR:Q8WZK1"/>
<dbReference type="Proteomes" id="UP000002485">
    <property type="component" value="Chromosome II"/>
</dbReference>
<dbReference type="GO" id="GO:0005763">
    <property type="term" value="C:mitochondrial small ribosomal subunit"/>
    <property type="evidence" value="ECO:0000250"/>
    <property type="project" value="PomBase"/>
</dbReference>
<dbReference type="GO" id="GO:0005739">
    <property type="term" value="C:mitochondrion"/>
    <property type="evidence" value="ECO:0007005"/>
    <property type="project" value="PomBase"/>
</dbReference>
<dbReference type="GO" id="GO:0003735">
    <property type="term" value="F:structural constituent of ribosome"/>
    <property type="evidence" value="ECO:0000250"/>
    <property type="project" value="PomBase"/>
</dbReference>
<dbReference type="GO" id="GO:0032543">
    <property type="term" value="P:mitochondrial translation"/>
    <property type="evidence" value="ECO:0000250"/>
    <property type="project" value="PomBase"/>
</dbReference>
<dbReference type="Gene3D" id="1.20.5.1150">
    <property type="entry name" value="Ribosomal protein S8"/>
    <property type="match status" value="1"/>
</dbReference>
<dbReference type="InterPro" id="IPR052837">
    <property type="entry name" value="Mitoribosomal_bS21"/>
</dbReference>
<dbReference type="InterPro" id="IPR001911">
    <property type="entry name" value="Ribosomal_bS21"/>
</dbReference>
<dbReference type="InterPro" id="IPR038380">
    <property type="entry name" value="Ribosomal_bS21_sf"/>
</dbReference>
<dbReference type="NCBIfam" id="TIGR00030">
    <property type="entry name" value="S21p"/>
    <property type="match status" value="1"/>
</dbReference>
<dbReference type="PANTHER" id="PTHR41237">
    <property type="entry name" value="37S RIBOSOMAL PROTEIN MRP21, MITOCHONDRIAL"/>
    <property type="match status" value="1"/>
</dbReference>
<dbReference type="PANTHER" id="PTHR41237:SF1">
    <property type="entry name" value="SMALL RIBOSOMAL SUBUNIT PROTEIN BS21M"/>
    <property type="match status" value="1"/>
</dbReference>
<dbReference type="Pfam" id="PF01165">
    <property type="entry name" value="Ribosomal_S21"/>
    <property type="match status" value="1"/>
</dbReference>
<accession>Q8WZK1</accession>
<reference key="1">
    <citation type="journal article" date="2002" name="Nature">
        <title>The genome sequence of Schizosaccharomyces pombe.</title>
        <authorList>
            <person name="Wood V."/>
            <person name="Gwilliam R."/>
            <person name="Rajandream M.A."/>
            <person name="Lyne M.H."/>
            <person name="Lyne R."/>
            <person name="Stewart A."/>
            <person name="Sgouros J.G."/>
            <person name="Peat N."/>
            <person name="Hayles J."/>
            <person name="Baker S.G."/>
            <person name="Basham D."/>
            <person name="Bowman S."/>
            <person name="Brooks K."/>
            <person name="Brown D."/>
            <person name="Brown S."/>
            <person name="Chillingworth T."/>
            <person name="Churcher C.M."/>
            <person name="Collins M."/>
            <person name="Connor R."/>
            <person name="Cronin A."/>
            <person name="Davis P."/>
            <person name="Feltwell T."/>
            <person name="Fraser A."/>
            <person name="Gentles S."/>
            <person name="Goble A."/>
            <person name="Hamlin N."/>
            <person name="Harris D.E."/>
            <person name="Hidalgo J."/>
            <person name="Hodgson G."/>
            <person name="Holroyd S."/>
            <person name="Hornsby T."/>
            <person name="Howarth S."/>
            <person name="Huckle E.J."/>
            <person name="Hunt S."/>
            <person name="Jagels K."/>
            <person name="James K.D."/>
            <person name="Jones L."/>
            <person name="Jones M."/>
            <person name="Leather S."/>
            <person name="McDonald S."/>
            <person name="McLean J."/>
            <person name="Mooney P."/>
            <person name="Moule S."/>
            <person name="Mungall K.L."/>
            <person name="Murphy L.D."/>
            <person name="Niblett D."/>
            <person name="Odell C."/>
            <person name="Oliver K."/>
            <person name="O'Neil S."/>
            <person name="Pearson D."/>
            <person name="Quail M.A."/>
            <person name="Rabbinowitsch E."/>
            <person name="Rutherford K.M."/>
            <person name="Rutter S."/>
            <person name="Saunders D."/>
            <person name="Seeger K."/>
            <person name="Sharp S."/>
            <person name="Skelton J."/>
            <person name="Simmonds M.N."/>
            <person name="Squares R."/>
            <person name="Squares S."/>
            <person name="Stevens K."/>
            <person name="Taylor K."/>
            <person name="Taylor R.G."/>
            <person name="Tivey A."/>
            <person name="Walsh S.V."/>
            <person name="Warren T."/>
            <person name="Whitehead S."/>
            <person name="Woodward J.R."/>
            <person name="Volckaert G."/>
            <person name="Aert R."/>
            <person name="Robben J."/>
            <person name="Grymonprez B."/>
            <person name="Weltjens I."/>
            <person name="Vanstreels E."/>
            <person name="Rieger M."/>
            <person name="Schaefer M."/>
            <person name="Mueller-Auer S."/>
            <person name="Gabel C."/>
            <person name="Fuchs M."/>
            <person name="Duesterhoeft A."/>
            <person name="Fritzc C."/>
            <person name="Holzer E."/>
            <person name="Moestl D."/>
            <person name="Hilbert H."/>
            <person name="Borzym K."/>
            <person name="Langer I."/>
            <person name="Beck A."/>
            <person name="Lehrach H."/>
            <person name="Reinhardt R."/>
            <person name="Pohl T.M."/>
            <person name="Eger P."/>
            <person name="Zimmermann W."/>
            <person name="Wedler H."/>
            <person name="Wambutt R."/>
            <person name="Purnelle B."/>
            <person name="Goffeau A."/>
            <person name="Cadieu E."/>
            <person name="Dreano S."/>
            <person name="Gloux S."/>
            <person name="Lelaure V."/>
            <person name="Mottier S."/>
            <person name="Galibert F."/>
            <person name="Aves S.J."/>
            <person name="Xiang Z."/>
            <person name="Hunt C."/>
            <person name="Moore K."/>
            <person name="Hurst S.M."/>
            <person name="Lucas M."/>
            <person name="Rochet M."/>
            <person name="Gaillardin C."/>
            <person name="Tallada V.A."/>
            <person name="Garzon A."/>
            <person name="Thode G."/>
            <person name="Daga R.R."/>
            <person name="Cruzado L."/>
            <person name="Jimenez J."/>
            <person name="Sanchez M."/>
            <person name="del Rey F."/>
            <person name="Benito J."/>
            <person name="Dominguez A."/>
            <person name="Revuelta J.L."/>
            <person name="Moreno S."/>
            <person name="Armstrong J."/>
            <person name="Forsburg S.L."/>
            <person name="Cerutti L."/>
            <person name="Lowe T."/>
            <person name="McCombie W.R."/>
            <person name="Paulsen I."/>
            <person name="Potashkin J."/>
            <person name="Shpakovski G.V."/>
            <person name="Ussery D."/>
            <person name="Barrell B.G."/>
            <person name="Nurse P."/>
        </authorList>
    </citation>
    <scope>NUCLEOTIDE SEQUENCE [LARGE SCALE GENOMIC DNA]</scope>
    <source>
        <strain>972 / ATCC 24843</strain>
    </source>
</reference>
<reference key="2">
    <citation type="journal article" date="2006" name="Nat. Biotechnol.">
        <title>ORFeome cloning and global analysis of protein localization in the fission yeast Schizosaccharomyces pombe.</title>
        <authorList>
            <person name="Matsuyama A."/>
            <person name="Arai R."/>
            <person name="Yashiroda Y."/>
            <person name="Shirai A."/>
            <person name="Kamata A."/>
            <person name="Sekido S."/>
            <person name="Kobayashi Y."/>
            <person name="Hashimoto A."/>
            <person name="Hamamoto M."/>
            <person name="Hiraoka Y."/>
            <person name="Horinouchi S."/>
            <person name="Yoshida M."/>
        </authorList>
    </citation>
    <scope>SUBCELLULAR LOCATION [LARGE SCALE ANALYSIS]</scope>
</reference>
<evidence type="ECO:0000250" key="1">
    <source>
        <dbReference type="UniProtKB" id="P38175"/>
    </source>
</evidence>
<evidence type="ECO:0000255" key="2"/>
<evidence type="ECO:0000269" key="3">
    <source>
    </source>
</evidence>
<evidence type="ECO:0000305" key="4"/>
<name>RT21_SCHPO</name>
<organism>
    <name type="scientific">Schizosaccharomyces pombe (strain 972 / ATCC 24843)</name>
    <name type="common">Fission yeast</name>
    <dbReference type="NCBI Taxonomy" id="284812"/>
    <lineage>
        <taxon>Eukaryota</taxon>
        <taxon>Fungi</taxon>
        <taxon>Dikarya</taxon>
        <taxon>Ascomycota</taxon>
        <taxon>Taphrinomycotina</taxon>
        <taxon>Schizosaccharomycetes</taxon>
        <taxon>Schizosaccharomycetales</taxon>
        <taxon>Schizosaccharomycetaceae</taxon>
        <taxon>Schizosaccharomyces</taxon>
    </lineage>
</organism>
<proteinExistence type="inferred from homology"/>